<organism>
    <name type="scientific">Aromatoleum aromaticum (strain DSM 19018 / LMG 30748 / EbN1)</name>
    <name type="common">Azoarcus sp. (strain EbN1)</name>
    <dbReference type="NCBI Taxonomy" id="76114"/>
    <lineage>
        <taxon>Bacteria</taxon>
        <taxon>Pseudomonadati</taxon>
        <taxon>Pseudomonadota</taxon>
        <taxon>Betaproteobacteria</taxon>
        <taxon>Rhodocyclales</taxon>
        <taxon>Rhodocyclaceae</taxon>
        <taxon>Aromatoleum</taxon>
    </lineage>
</organism>
<gene>
    <name evidence="1" type="primary">hisD</name>
    <name type="ordered locus">AZOSEA06980</name>
    <name type="ORF">ebA1299</name>
</gene>
<protein>
    <recommendedName>
        <fullName evidence="1">Histidinol dehydrogenase</fullName>
        <shortName evidence="1">HDH</shortName>
        <ecNumber evidence="1">1.1.1.23</ecNumber>
    </recommendedName>
</protein>
<accession>Q5P790</accession>
<feature type="chain" id="PRO_0000135718" description="Histidinol dehydrogenase">
    <location>
        <begin position="1"/>
        <end position="438"/>
    </location>
</feature>
<feature type="active site" description="Proton acceptor" evidence="1">
    <location>
        <position position="334"/>
    </location>
</feature>
<feature type="active site" description="Proton acceptor" evidence="1">
    <location>
        <position position="335"/>
    </location>
</feature>
<feature type="binding site" evidence="1">
    <location>
        <position position="137"/>
    </location>
    <ligand>
        <name>NAD(+)</name>
        <dbReference type="ChEBI" id="CHEBI:57540"/>
    </ligand>
</feature>
<feature type="binding site" evidence="1">
    <location>
        <position position="198"/>
    </location>
    <ligand>
        <name>NAD(+)</name>
        <dbReference type="ChEBI" id="CHEBI:57540"/>
    </ligand>
</feature>
<feature type="binding site" evidence="1">
    <location>
        <position position="221"/>
    </location>
    <ligand>
        <name>NAD(+)</name>
        <dbReference type="ChEBI" id="CHEBI:57540"/>
    </ligand>
</feature>
<feature type="binding site" evidence="1">
    <location>
        <position position="244"/>
    </location>
    <ligand>
        <name>substrate</name>
    </ligand>
</feature>
<feature type="binding site" evidence="1">
    <location>
        <position position="266"/>
    </location>
    <ligand>
        <name>substrate</name>
    </ligand>
</feature>
<feature type="binding site" evidence="1">
    <location>
        <position position="266"/>
    </location>
    <ligand>
        <name>Zn(2+)</name>
        <dbReference type="ChEBI" id="CHEBI:29105"/>
    </ligand>
</feature>
<feature type="binding site" evidence="1">
    <location>
        <position position="269"/>
    </location>
    <ligand>
        <name>substrate</name>
    </ligand>
</feature>
<feature type="binding site" evidence="1">
    <location>
        <position position="269"/>
    </location>
    <ligand>
        <name>Zn(2+)</name>
        <dbReference type="ChEBI" id="CHEBI:29105"/>
    </ligand>
</feature>
<feature type="binding site" evidence="1">
    <location>
        <position position="335"/>
    </location>
    <ligand>
        <name>substrate</name>
    </ligand>
</feature>
<feature type="binding site" evidence="1">
    <location>
        <position position="368"/>
    </location>
    <ligand>
        <name>substrate</name>
    </ligand>
</feature>
<feature type="binding site" evidence="1">
    <location>
        <position position="368"/>
    </location>
    <ligand>
        <name>Zn(2+)</name>
        <dbReference type="ChEBI" id="CHEBI:29105"/>
    </ligand>
</feature>
<feature type="binding site" evidence="1">
    <location>
        <position position="422"/>
    </location>
    <ligand>
        <name>substrate</name>
    </ligand>
</feature>
<feature type="binding site" evidence="1">
    <location>
        <position position="427"/>
    </location>
    <ligand>
        <name>substrate</name>
    </ligand>
</feature>
<feature type="binding site" evidence="1">
    <location>
        <position position="427"/>
    </location>
    <ligand>
        <name>Zn(2+)</name>
        <dbReference type="ChEBI" id="CHEBI:29105"/>
    </ligand>
</feature>
<dbReference type="EC" id="1.1.1.23" evidence="1"/>
<dbReference type="EMBL" id="CR555306">
    <property type="protein sequence ID" value="CAI06821.1"/>
    <property type="molecule type" value="Genomic_DNA"/>
</dbReference>
<dbReference type="RefSeq" id="WP_011236549.1">
    <property type="nucleotide sequence ID" value="NC_006513.1"/>
</dbReference>
<dbReference type="SMR" id="Q5P790"/>
<dbReference type="STRING" id="76114.ebA1299"/>
<dbReference type="KEGG" id="eba:ebA1299"/>
<dbReference type="eggNOG" id="COG0141">
    <property type="taxonomic scope" value="Bacteria"/>
</dbReference>
<dbReference type="HOGENOM" id="CLU_006732_3_3_4"/>
<dbReference type="OrthoDB" id="9805269at2"/>
<dbReference type="UniPathway" id="UPA00031">
    <property type="reaction ID" value="UER00014"/>
</dbReference>
<dbReference type="Proteomes" id="UP000006552">
    <property type="component" value="Chromosome"/>
</dbReference>
<dbReference type="GO" id="GO:0005829">
    <property type="term" value="C:cytosol"/>
    <property type="evidence" value="ECO:0007669"/>
    <property type="project" value="TreeGrafter"/>
</dbReference>
<dbReference type="GO" id="GO:0004399">
    <property type="term" value="F:histidinol dehydrogenase activity"/>
    <property type="evidence" value="ECO:0007669"/>
    <property type="project" value="UniProtKB-UniRule"/>
</dbReference>
<dbReference type="GO" id="GO:0051287">
    <property type="term" value="F:NAD binding"/>
    <property type="evidence" value="ECO:0007669"/>
    <property type="project" value="InterPro"/>
</dbReference>
<dbReference type="GO" id="GO:0008270">
    <property type="term" value="F:zinc ion binding"/>
    <property type="evidence" value="ECO:0007669"/>
    <property type="project" value="UniProtKB-UniRule"/>
</dbReference>
<dbReference type="GO" id="GO:0000105">
    <property type="term" value="P:L-histidine biosynthetic process"/>
    <property type="evidence" value="ECO:0007669"/>
    <property type="project" value="UniProtKB-UniRule"/>
</dbReference>
<dbReference type="CDD" id="cd06572">
    <property type="entry name" value="Histidinol_dh"/>
    <property type="match status" value="1"/>
</dbReference>
<dbReference type="FunFam" id="3.40.50.1980:FF:000001">
    <property type="entry name" value="Histidinol dehydrogenase"/>
    <property type="match status" value="1"/>
</dbReference>
<dbReference type="FunFam" id="3.40.50.1980:FF:000026">
    <property type="entry name" value="Histidinol dehydrogenase"/>
    <property type="match status" value="1"/>
</dbReference>
<dbReference type="Gene3D" id="1.20.5.1300">
    <property type="match status" value="1"/>
</dbReference>
<dbReference type="Gene3D" id="3.40.50.1980">
    <property type="entry name" value="Nitrogenase molybdenum iron protein domain"/>
    <property type="match status" value="2"/>
</dbReference>
<dbReference type="HAMAP" id="MF_01024">
    <property type="entry name" value="HisD"/>
    <property type="match status" value="1"/>
</dbReference>
<dbReference type="InterPro" id="IPR016161">
    <property type="entry name" value="Ald_DH/histidinol_DH"/>
</dbReference>
<dbReference type="InterPro" id="IPR001692">
    <property type="entry name" value="Histidinol_DH_CS"/>
</dbReference>
<dbReference type="InterPro" id="IPR022695">
    <property type="entry name" value="Histidinol_DH_monofunct"/>
</dbReference>
<dbReference type="InterPro" id="IPR012131">
    <property type="entry name" value="Hstdl_DH"/>
</dbReference>
<dbReference type="NCBIfam" id="TIGR00069">
    <property type="entry name" value="hisD"/>
    <property type="match status" value="1"/>
</dbReference>
<dbReference type="PANTHER" id="PTHR21256:SF2">
    <property type="entry name" value="HISTIDINE BIOSYNTHESIS TRIFUNCTIONAL PROTEIN"/>
    <property type="match status" value="1"/>
</dbReference>
<dbReference type="PANTHER" id="PTHR21256">
    <property type="entry name" value="HISTIDINOL DEHYDROGENASE HDH"/>
    <property type="match status" value="1"/>
</dbReference>
<dbReference type="Pfam" id="PF00815">
    <property type="entry name" value="Histidinol_dh"/>
    <property type="match status" value="1"/>
</dbReference>
<dbReference type="PIRSF" id="PIRSF000099">
    <property type="entry name" value="Histidinol_dh"/>
    <property type="match status" value="1"/>
</dbReference>
<dbReference type="PRINTS" id="PR00083">
    <property type="entry name" value="HOLDHDRGNASE"/>
</dbReference>
<dbReference type="SUPFAM" id="SSF53720">
    <property type="entry name" value="ALDH-like"/>
    <property type="match status" value="1"/>
</dbReference>
<dbReference type="PROSITE" id="PS00611">
    <property type="entry name" value="HISOL_DEHYDROGENASE"/>
    <property type="match status" value="1"/>
</dbReference>
<comment type="function">
    <text evidence="1">Catalyzes the sequential NAD-dependent oxidations of L-histidinol to L-histidinaldehyde and then to L-histidine.</text>
</comment>
<comment type="catalytic activity">
    <reaction evidence="1">
        <text>L-histidinol + 2 NAD(+) + H2O = L-histidine + 2 NADH + 3 H(+)</text>
        <dbReference type="Rhea" id="RHEA:20641"/>
        <dbReference type="ChEBI" id="CHEBI:15377"/>
        <dbReference type="ChEBI" id="CHEBI:15378"/>
        <dbReference type="ChEBI" id="CHEBI:57540"/>
        <dbReference type="ChEBI" id="CHEBI:57595"/>
        <dbReference type="ChEBI" id="CHEBI:57699"/>
        <dbReference type="ChEBI" id="CHEBI:57945"/>
        <dbReference type="EC" id="1.1.1.23"/>
    </reaction>
</comment>
<comment type="cofactor">
    <cofactor evidence="1">
        <name>Zn(2+)</name>
        <dbReference type="ChEBI" id="CHEBI:29105"/>
    </cofactor>
    <text evidence="1">Binds 1 zinc ion per subunit.</text>
</comment>
<comment type="pathway">
    <text evidence="1">Amino-acid biosynthesis; L-histidine biosynthesis; L-histidine from 5-phospho-alpha-D-ribose 1-diphosphate: step 9/9.</text>
</comment>
<comment type="similarity">
    <text evidence="1">Belongs to the histidinol dehydrogenase family.</text>
</comment>
<keyword id="KW-0028">Amino-acid biosynthesis</keyword>
<keyword id="KW-0368">Histidine biosynthesis</keyword>
<keyword id="KW-0479">Metal-binding</keyword>
<keyword id="KW-0520">NAD</keyword>
<keyword id="KW-0560">Oxidoreductase</keyword>
<keyword id="KW-1185">Reference proteome</keyword>
<keyword id="KW-0862">Zinc</keyword>
<proteinExistence type="inferred from homology"/>
<sequence>MTAPAAAIRRLDAREPEFLATLDALLAFEGGADARIDAAVSEILRAVRTTGDAAVLEYTRRFDHLDVKSMVQLELSKSELKAALDSLTVEQREALRVAADRVRVYHERQRAESWDYVEADGTRLGQKVTPLDRVGLYVPGGRASYPSSVLMNAIPAKVAGVGELIMVVPTPNGEKNPLVLAAAAITGVDRVFTIGGAQAVAALAYGTQTLPQVDKIVGPGNAYVAEAKRRVFGTVGIDMVAGPSEVLIISDGSGQAGWVAMDLFAQAEHDELAQSILLCTDAGFIDAVAASIERLLPSMPRRETIAASLANRGALIHVDSLEQACAIANRIAPEHLELSLDDAEPWIGRIRHAGAIFVGHWSVEALGDYCAGPNHVLPTMRSARFSSPLGVYDFQKRTSIVQISEAGAQTLGRVASILARGEGLQAHARSAEMRLHDR</sequence>
<evidence type="ECO:0000255" key="1">
    <source>
        <dbReference type="HAMAP-Rule" id="MF_01024"/>
    </source>
</evidence>
<reference key="1">
    <citation type="journal article" date="2005" name="Arch. Microbiol.">
        <title>The genome sequence of an anaerobic aromatic-degrading denitrifying bacterium, strain EbN1.</title>
        <authorList>
            <person name="Rabus R."/>
            <person name="Kube M."/>
            <person name="Heider J."/>
            <person name="Beck A."/>
            <person name="Heitmann K."/>
            <person name="Widdel F."/>
            <person name="Reinhardt R."/>
        </authorList>
    </citation>
    <scope>NUCLEOTIDE SEQUENCE [LARGE SCALE GENOMIC DNA]</scope>
    <source>
        <strain>DSM 19018 / LMG 30748 / EbN1</strain>
    </source>
</reference>
<name>HISX_AROAE</name>